<comment type="catalytic activity">
    <reaction evidence="1">
        <text>thymidine + ATP = dTMP + ADP + H(+)</text>
        <dbReference type="Rhea" id="RHEA:19129"/>
        <dbReference type="ChEBI" id="CHEBI:15378"/>
        <dbReference type="ChEBI" id="CHEBI:17748"/>
        <dbReference type="ChEBI" id="CHEBI:30616"/>
        <dbReference type="ChEBI" id="CHEBI:63528"/>
        <dbReference type="ChEBI" id="CHEBI:456216"/>
        <dbReference type="EC" id="2.7.1.21"/>
    </reaction>
</comment>
<comment type="subunit">
    <text evidence="1">Homotetramer.</text>
</comment>
<comment type="subcellular location">
    <subcellularLocation>
        <location evidence="1">Cytoplasm</location>
    </subcellularLocation>
</comment>
<comment type="similarity">
    <text evidence="1">Belongs to the thymidine kinase family.</text>
</comment>
<sequence length="196" mass="21897">MAQLYFYYSAMNAGKSTALLQSSYNYQERGMRTLVFTAEIDNRFGVGTVSSRIGLSSQAQLYNSGTSLLSIIAAEHQDTPIHCILLDECQFLTKEQVQELCQVVDELHLPVLCYGLRTDFLGELFPGSKYLLAWADKLVELKTICHCGRKANMVLRLDEQGRAVHNGEQVVIGGNESYVSVCRRHYKEAIKAACCS</sequence>
<accession>Q8ZEJ1</accession>
<accession>Q0WEY8</accession>
<reference key="1">
    <citation type="journal article" date="2001" name="Nature">
        <title>Genome sequence of Yersinia pestis, the causative agent of plague.</title>
        <authorList>
            <person name="Parkhill J."/>
            <person name="Wren B.W."/>
            <person name="Thomson N.R."/>
            <person name="Titball R.W."/>
            <person name="Holden M.T.G."/>
            <person name="Prentice M.B."/>
            <person name="Sebaihia M."/>
            <person name="James K.D."/>
            <person name="Churcher C.M."/>
            <person name="Mungall K.L."/>
            <person name="Baker S."/>
            <person name="Basham D."/>
            <person name="Bentley S.D."/>
            <person name="Brooks K."/>
            <person name="Cerdeno-Tarraga A.-M."/>
            <person name="Chillingworth T."/>
            <person name="Cronin A."/>
            <person name="Davies R.M."/>
            <person name="Davis P."/>
            <person name="Dougan G."/>
            <person name="Feltwell T."/>
            <person name="Hamlin N."/>
            <person name="Holroyd S."/>
            <person name="Jagels K."/>
            <person name="Karlyshev A.V."/>
            <person name="Leather S."/>
            <person name="Moule S."/>
            <person name="Oyston P.C.F."/>
            <person name="Quail M.A."/>
            <person name="Rutherford K.M."/>
            <person name="Simmonds M."/>
            <person name="Skelton J."/>
            <person name="Stevens K."/>
            <person name="Whitehead S."/>
            <person name="Barrell B.G."/>
        </authorList>
    </citation>
    <scope>NUCLEOTIDE SEQUENCE [LARGE SCALE GENOMIC DNA]</scope>
    <source>
        <strain>CO-92 / Biovar Orientalis</strain>
    </source>
</reference>
<reference key="2">
    <citation type="journal article" date="2002" name="J. Bacteriol.">
        <title>Genome sequence of Yersinia pestis KIM.</title>
        <authorList>
            <person name="Deng W."/>
            <person name="Burland V."/>
            <person name="Plunkett G. III"/>
            <person name="Boutin A."/>
            <person name="Mayhew G.F."/>
            <person name="Liss P."/>
            <person name="Perna N.T."/>
            <person name="Rose D.J."/>
            <person name="Mau B."/>
            <person name="Zhou S."/>
            <person name="Schwartz D.C."/>
            <person name="Fetherston J.D."/>
            <person name="Lindler L.E."/>
            <person name="Brubaker R.R."/>
            <person name="Plano G.V."/>
            <person name="Straley S.C."/>
            <person name="McDonough K.A."/>
            <person name="Nilles M.L."/>
            <person name="Matson J.S."/>
            <person name="Blattner F.R."/>
            <person name="Perry R.D."/>
        </authorList>
    </citation>
    <scope>NUCLEOTIDE SEQUENCE [LARGE SCALE GENOMIC DNA]</scope>
    <source>
        <strain>KIM10+ / Biovar Mediaevalis</strain>
    </source>
</reference>
<reference key="3">
    <citation type="journal article" date="2004" name="DNA Res.">
        <title>Complete genome sequence of Yersinia pestis strain 91001, an isolate avirulent to humans.</title>
        <authorList>
            <person name="Song Y."/>
            <person name="Tong Z."/>
            <person name="Wang J."/>
            <person name="Wang L."/>
            <person name="Guo Z."/>
            <person name="Han Y."/>
            <person name="Zhang J."/>
            <person name="Pei D."/>
            <person name="Zhou D."/>
            <person name="Qin H."/>
            <person name="Pang X."/>
            <person name="Han Y."/>
            <person name="Zhai J."/>
            <person name="Li M."/>
            <person name="Cui B."/>
            <person name="Qi Z."/>
            <person name="Jin L."/>
            <person name="Dai R."/>
            <person name="Chen F."/>
            <person name="Li S."/>
            <person name="Ye C."/>
            <person name="Du Z."/>
            <person name="Lin W."/>
            <person name="Wang J."/>
            <person name="Yu J."/>
            <person name="Yang H."/>
            <person name="Wang J."/>
            <person name="Huang P."/>
            <person name="Yang R."/>
        </authorList>
    </citation>
    <scope>NUCLEOTIDE SEQUENCE [LARGE SCALE GENOMIC DNA]</scope>
    <source>
        <strain>91001 / Biovar Mediaevalis</strain>
    </source>
</reference>
<feature type="chain" id="PRO_0000175051" description="Thymidine kinase">
    <location>
        <begin position="1"/>
        <end position="196"/>
    </location>
</feature>
<feature type="active site" description="Proton acceptor" evidence="1">
    <location>
        <position position="88"/>
    </location>
</feature>
<feature type="binding site" evidence="1">
    <location>
        <begin position="9"/>
        <end position="16"/>
    </location>
    <ligand>
        <name>ATP</name>
        <dbReference type="ChEBI" id="CHEBI:30616"/>
    </ligand>
</feature>
<feature type="binding site" evidence="1">
    <location>
        <begin position="87"/>
        <end position="90"/>
    </location>
    <ligand>
        <name>ATP</name>
        <dbReference type="ChEBI" id="CHEBI:30616"/>
    </ligand>
</feature>
<feature type="binding site" evidence="1">
    <location>
        <position position="145"/>
    </location>
    <ligand>
        <name>Zn(2+)</name>
        <dbReference type="ChEBI" id="CHEBI:29105"/>
    </ligand>
</feature>
<feature type="binding site" evidence="1">
    <location>
        <position position="147"/>
    </location>
    <ligand>
        <name>Zn(2+)</name>
        <dbReference type="ChEBI" id="CHEBI:29105"/>
    </ligand>
</feature>
<feature type="binding site" evidence="1">
    <location>
        <position position="182"/>
    </location>
    <ligand>
        <name>Zn(2+)</name>
        <dbReference type="ChEBI" id="CHEBI:29105"/>
    </ligand>
</feature>
<feature type="binding site" evidence="1">
    <location>
        <position position="185"/>
    </location>
    <ligand>
        <name>Zn(2+)</name>
        <dbReference type="ChEBI" id="CHEBI:29105"/>
    </ligand>
</feature>
<name>KITH_YERPE</name>
<protein>
    <recommendedName>
        <fullName evidence="1">Thymidine kinase</fullName>
        <ecNumber evidence="1">2.7.1.21</ecNumber>
    </recommendedName>
</protein>
<gene>
    <name evidence="1" type="primary">tdk</name>
    <name type="ordered locus">YPO2176</name>
    <name type="ordered locus">y2145</name>
    <name type="ordered locus">YP_1975</name>
</gene>
<proteinExistence type="inferred from homology"/>
<dbReference type="EC" id="2.7.1.21" evidence="1"/>
<dbReference type="EMBL" id="AL590842">
    <property type="protein sequence ID" value="CAL20807.1"/>
    <property type="molecule type" value="Genomic_DNA"/>
</dbReference>
<dbReference type="EMBL" id="AE009952">
    <property type="protein sequence ID" value="AAM85707.1"/>
    <property type="molecule type" value="Genomic_DNA"/>
</dbReference>
<dbReference type="EMBL" id="AE017042">
    <property type="protein sequence ID" value="AAS62192.1"/>
    <property type="molecule type" value="Genomic_DNA"/>
</dbReference>
<dbReference type="PIR" id="AD0265">
    <property type="entry name" value="AD0265"/>
</dbReference>
<dbReference type="RefSeq" id="WP_002210659.1">
    <property type="nucleotide sequence ID" value="NZ_WUCM01000121.1"/>
</dbReference>
<dbReference type="RefSeq" id="YP_002347150.1">
    <property type="nucleotide sequence ID" value="NC_003143.1"/>
</dbReference>
<dbReference type="SMR" id="Q8ZEJ1"/>
<dbReference type="STRING" id="214092.YPO2176"/>
<dbReference type="PaxDb" id="214092-YPO2176"/>
<dbReference type="DNASU" id="1147092"/>
<dbReference type="EnsemblBacteria" id="AAS62192">
    <property type="protein sequence ID" value="AAS62192"/>
    <property type="gene ID" value="YP_1975"/>
</dbReference>
<dbReference type="KEGG" id="ype:YPO2176"/>
<dbReference type="KEGG" id="ypk:y2145"/>
<dbReference type="KEGG" id="ypm:YP_1975"/>
<dbReference type="PATRIC" id="fig|214092.21.peg.2568"/>
<dbReference type="eggNOG" id="COG1435">
    <property type="taxonomic scope" value="Bacteria"/>
</dbReference>
<dbReference type="HOGENOM" id="CLU_064400_2_1_6"/>
<dbReference type="OMA" id="GTMDCGK"/>
<dbReference type="OrthoDB" id="9781579at2"/>
<dbReference type="Proteomes" id="UP000000815">
    <property type="component" value="Chromosome"/>
</dbReference>
<dbReference type="Proteomes" id="UP000001019">
    <property type="component" value="Chromosome"/>
</dbReference>
<dbReference type="Proteomes" id="UP000002490">
    <property type="component" value="Chromosome"/>
</dbReference>
<dbReference type="GO" id="GO:0005829">
    <property type="term" value="C:cytosol"/>
    <property type="evidence" value="ECO:0000318"/>
    <property type="project" value="GO_Central"/>
</dbReference>
<dbReference type="GO" id="GO:0005524">
    <property type="term" value="F:ATP binding"/>
    <property type="evidence" value="ECO:0007669"/>
    <property type="project" value="UniProtKB-UniRule"/>
</dbReference>
<dbReference type="GO" id="GO:0004797">
    <property type="term" value="F:thymidine kinase activity"/>
    <property type="evidence" value="ECO:0000318"/>
    <property type="project" value="GO_Central"/>
</dbReference>
<dbReference type="GO" id="GO:0008270">
    <property type="term" value="F:zinc ion binding"/>
    <property type="evidence" value="ECO:0007669"/>
    <property type="project" value="UniProtKB-UniRule"/>
</dbReference>
<dbReference type="GO" id="GO:0071897">
    <property type="term" value="P:DNA biosynthetic process"/>
    <property type="evidence" value="ECO:0007669"/>
    <property type="project" value="UniProtKB-KW"/>
</dbReference>
<dbReference type="GO" id="GO:0046104">
    <property type="term" value="P:thymidine metabolic process"/>
    <property type="evidence" value="ECO:0000318"/>
    <property type="project" value="GO_Central"/>
</dbReference>
<dbReference type="FunFam" id="3.30.60.20:FF:000017">
    <property type="entry name" value="Thymidine kinase"/>
    <property type="match status" value="1"/>
</dbReference>
<dbReference type="FunFam" id="3.40.50.300:FF:000323">
    <property type="entry name" value="Thymidine kinase"/>
    <property type="match status" value="1"/>
</dbReference>
<dbReference type="Gene3D" id="3.30.60.20">
    <property type="match status" value="1"/>
</dbReference>
<dbReference type="Gene3D" id="3.40.50.300">
    <property type="entry name" value="P-loop containing nucleotide triphosphate hydrolases"/>
    <property type="match status" value="1"/>
</dbReference>
<dbReference type="HAMAP" id="MF_00124">
    <property type="entry name" value="Thymidine_kinase"/>
    <property type="match status" value="1"/>
</dbReference>
<dbReference type="InterPro" id="IPR027417">
    <property type="entry name" value="P-loop_NTPase"/>
</dbReference>
<dbReference type="InterPro" id="IPR001267">
    <property type="entry name" value="Thymidine_kinase"/>
</dbReference>
<dbReference type="InterPro" id="IPR020633">
    <property type="entry name" value="Thymidine_kinase_CS"/>
</dbReference>
<dbReference type="NCBIfam" id="NF003300">
    <property type="entry name" value="PRK04296.1-5"/>
    <property type="match status" value="1"/>
</dbReference>
<dbReference type="PANTHER" id="PTHR11441">
    <property type="entry name" value="THYMIDINE KINASE"/>
    <property type="match status" value="1"/>
</dbReference>
<dbReference type="PANTHER" id="PTHR11441:SF0">
    <property type="entry name" value="THYMIDINE KINASE, CYTOSOLIC"/>
    <property type="match status" value="1"/>
</dbReference>
<dbReference type="Pfam" id="PF00265">
    <property type="entry name" value="TK"/>
    <property type="match status" value="1"/>
</dbReference>
<dbReference type="PIRSF" id="PIRSF035805">
    <property type="entry name" value="TK_cell"/>
    <property type="match status" value="1"/>
</dbReference>
<dbReference type="SUPFAM" id="SSF57716">
    <property type="entry name" value="Glucocorticoid receptor-like (DNA-binding domain)"/>
    <property type="match status" value="1"/>
</dbReference>
<dbReference type="SUPFAM" id="SSF52540">
    <property type="entry name" value="P-loop containing nucleoside triphosphate hydrolases"/>
    <property type="match status" value="1"/>
</dbReference>
<dbReference type="PROSITE" id="PS00603">
    <property type="entry name" value="TK_CELLULAR_TYPE"/>
    <property type="match status" value="1"/>
</dbReference>
<organism>
    <name type="scientific">Yersinia pestis</name>
    <dbReference type="NCBI Taxonomy" id="632"/>
    <lineage>
        <taxon>Bacteria</taxon>
        <taxon>Pseudomonadati</taxon>
        <taxon>Pseudomonadota</taxon>
        <taxon>Gammaproteobacteria</taxon>
        <taxon>Enterobacterales</taxon>
        <taxon>Yersiniaceae</taxon>
        <taxon>Yersinia</taxon>
    </lineage>
</organism>
<evidence type="ECO:0000255" key="1">
    <source>
        <dbReference type="HAMAP-Rule" id="MF_00124"/>
    </source>
</evidence>
<keyword id="KW-0067">ATP-binding</keyword>
<keyword id="KW-0963">Cytoplasm</keyword>
<keyword id="KW-0237">DNA synthesis</keyword>
<keyword id="KW-0418">Kinase</keyword>
<keyword id="KW-0479">Metal-binding</keyword>
<keyword id="KW-0547">Nucleotide-binding</keyword>
<keyword id="KW-1185">Reference proteome</keyword>
<keyword id="KW-0808">Transferase</keyword>
<keyword id="KW-0862">Zinc</keyword>